<sequence length="329" mass="36540">MQGSVTEFLKPHLVNIEQVSSTHAKVTLEPLERGFGHTLGNALRRILLSSMPGCAVTEVEIDGVLHEYSSKEGVQEDILEVLLNLKGLAVKVSGKDDIILTLNKSGIGPVTAADITHDGDVEIVNPHHVICHLTDKDASISMRIRVQRGRGYVPASARVHSQDEDRPIGRLLVDARFSPVDRIAYNVESARVEQRTDLDKLIIEMETNGTIDPEEAIRRAATILAEQLDAFVDLRDVRQPEVKEEKPEFDPILLRPVDDLELTVRSHNCLKAETIHYICDLVQRTEVELLKTPNLGKKSLTEIKDVLASRGLSLGMRLENWPPASIAED</sequence>
<keyword id="KW-0240">DNA-directed RNA polymerase</keyword>
<keyword id="KW-0548">Nucleotidyltransferase</keyword>
<keyword id="KW-1185">Reference proteome</keyword>
<keyword id="KW-0804">Transcription</keyword>
<keyword id="KW-0808">Transferase</keyword>
<proteinExistence type="inferred from homology"/>
<name>RPOA_ACTP2</name>
<evidence type="ECO:0000255" key="1">
    <source>
        <dbReference type="HAMAP-Rule" id="MF_00059"/>
    </source>
</evidence>
<reference key="1">
    <citation type="journal article" date="2008" name="J. Bacteriol.">
        <title>The complete genome sequence of Actinobacillus pleuropneumoniae L20 (serotype 5b).</title>
        <authorList>
            <person name="Foote S.J."/>
            <person name="Bosse J.T."/>
            <person name="Bouevitch A.B."/>
            <person name="Langford P.R."/>
            <person name="Young N.M."/>
            <person name="Nash J.H.E."/>
        </authorList>
    </citation>
    <scope>NUCLEOTIDE SEQUENCE [LARGE SCALE GENOMIC DNA]</scope>
    <source>
        <strain>L20</strain>
    </source>
</reference>
<dbReference type="EC" id="2.7.7.6" evidence="1"/>
<dbReference type="EMBL" id="CP000569">
    <property type="protein sequence ID" value="ABN74868.1"/>
    <property type="molecule type" value="Genomic_DNA"/>
</dbReference>
<dbReference type="RefSeq" id="WP_011848655.1">
    <property type="nucleotide sequence ID" value="NC_009053.1"/>
</dbReference>
<dbReference type="SMR" id="A3N382"/>
<dbReference type="STRING" id="416269.APL_1784"/>
<dbReference type="EnsemblBacteria" id="ABN74868">
    <property type="protein sequence ID" value="ABN74868"/>
    <property type="gene ID" value="APL_1784"/>
</dbReference>
<dbReference type="KEGG" id="apl:APL_1784"/>
<dbReference type="PATRIC" id="fig|416269.6.peg.1855"/>
<dbReference type="eggNOG" id="COG0202">
    <property type="taxonomic scope" value="Bacteria"/>
</dbReference>
<dbReference type="HOGENOM" id="CLU_053084_0_0_6"/>
<dbReference type="Proteomes" id="UP000001432">
    <property type="component" value="Chromosome"/>
</dbReference>
<dbReference type="GO" id="GO:0005737">
    <property type="term" value="C:cytoplasm"/>
    <property type="evidence" value="ECO:0007669"/>
    <property type="project" value="UniProtKB-ARBA"/>
</dbReference>
<dbReference type="GO" id="GO:0000428">
    <property type="term" value="C:DNA-directed RNA polymerase complex"/>
    <property type="evidence" value="ECO:0007669"/>
    <property type="project" value="UniProtKB-KW"/>
</dbReference>
<dbReference type="GO" id="GO:0003677">
    <property type="term" value="F:DNA binding"/>
    <property type="evidence" value="ECO:0007669"/>
    <property type="project" value="UniProtKB-UniRule"/>
</dbReference>
<dbReference type="GO" id="GO:0003899">
    <property type="term" value="F:DNA-directed RNA polymerase activity"/>
    <property type="evidence" value="ECO:0007669"/>
    <property type="project" value="UniProtKB-UniRule"/>
</dbReference>
<dbReference type="GO" id="GO:0046983">
    <property type="term" value="F:protein dimerization activity"/>
    <property type="evidence" value="ECO:0007669"/>
    <property type="project" value="InterPro"/>
</dbReference>
<dbReference type="GO" id="GO:0006351">
    <property type="term" value="P:DNA-templated transcription"/>
    <property type="evidence" value="ECO:0007669"/>
    <property type="project" value="UniProtKB-UniRule"/>
</dbReference>
<dbReference type="CDD" id="cd06928">
    <property type="entry name" value="RNAP_alpha_NTD"/>
    <property type="match status" value="1"/>
</dbReference>
<dbReference type="FunFam" id="1.10.150.20:FF:000001">
    <property type="entry name" value="DNA-directed RNA polymerase subunit alpha"/>
    <property type="match status" value="1"/>
</dbReference>
<dbReference type="FunFam" id="2.170.120.12:FF:000001">
    <property type="entry name" value="DNA-directed RNA polymerase subunit alpha"/>
    <property type="match status" value="1"/>
</dbReference>
<dbReference type="Gene3D" id="1.10.150.20">
    <property type="entry name" value="5' to 3' exonuclease, C-terminal subdomain"/>
    <property type="match status" value="1"/>
</dbReference>
<dbReference type="Gene3D" id="2.170.120.12">
    <property type="entry name" value="DNA-directed RNA polymerase, insert domain"/>
    <property type="match status" value="1"/>
</dbReference>
<dbReference type="Gene3D" id="3.30.1360.10">
    <property type="entry name" value="RNA polymerase, RBP11-like subunit"/>
    <property type="match status" value="1"/>
</dbReference>
<dbReference type="HAMAP" id="MF_00059">
    <property type="entry name" value="RNApol_bact_RpoA"/>
    <property type="match status" value="1"/>
</dbReference>
<dbReference type="InterPro" id="IPR011262">
    <property type="entry name" value="DNA-dir_RNA_pol_insert"/>
</dbReference>
<dbReference type="InterPro" id="IPR011263">
    <property type="entry name" value="DNA-dir_RNA_pol_RpoA/D/Rpb3"/>
</dbReference>
<dbReference type="InterPro" id="IPR011773">
    <property type="entry name" value="DNA-dir_RpoA"/>
</dbReference>
<dbReference type="InterPro" id="IPR036603">
    <property type="entry name" value="RBP11-like"/>
</dbReference>
<dbReference type="InterPro" id="IPR011260">
    <property type="entry name" value="RNAP_asu_C"/>
</dbReference>
<dbReference type="InterPro" id="IPR036643">
    <property type="entry name" value="RNApol_insert_sf"/>
</dbReference>
<dbReference type="NCBIfam" id="NF003513">
    <property type="entry name" value="PRK05182.1-2"/>
    <property type="match status" value="1"/>
</dbReference>
<dbReference type="NCBIfam" id="NF003519">
    <property type="entry name" value="PRK05182.2-5"/>
    <property type="match status" value="1"/>
</dbReference>
<dbReference type="NCBIfam" id="TIGR02027">
    <property type="entry name" value="rpoA"/>
    <property type="match status" value="1"/>
</dbReference>
<dbReference type="Pfam" id="PF01000">
    <property type="entry name" value="RNA_pol_A_bac"/>
    <property type="match status" value="1"/>
</dbReference>
<dbReference type="Pfam" id="PF03118">
    <property type="entry name" value="RNA_pol_A_CTD"/>
    <property type="match status" value="1"/>
</dbReference>
<dbReference type="Pfam" id="PF01193">
    <property type="entry name" value="RNA_pol_L"/>
    <property type="match status" value="1"/>
</dbReference>
<dbReference type="SMART" id="SM00662">
    <property type="entry name" value="RPOLD"/>
    <property type="match status" value="1"/>
</dbReference>
<dbReference type="SUPFAM" id="SSF47789">
    <property type="entry name" value="C-terminal domain of RNA polymerase alpha subunit"/>
    <property type="match status" value="1"/>
</dbReference>
<dbReference type="SUPFAM" id="SSF56553">
    <property type="entry name" value="Insert subdomain of RNA polymerase alpha subunit"/>
    <property type="match status" value="1"/>
</dbReference>
<dbReference type="SUPFAM" id="SSF55257">
    <property type="entry name" value="RBP11-like subunits of RNA polymerase"/>
    <property type="match status" value="1"/>
</dbReference>
<comment type="function">
    <text evidence="1">DNA-dependent RNA polymerase catalyzes the transcription of DNA into RNA using the four ribonucleoside triphosphates as substrates.</text>
</comment>
<comment type="catalytic activity">
    <reaction evidence="1">
        <text>RNA(n) + a ribonucleoside 5'-triphosphate = RNA(n+1) + diphosphate</text>
        <dbReference type="Rhea" id="RHEA:21248"/>
        <dbReference type="Rhea" id="RHEA-COMP:14527"/>
        <dbReference type="Rhea" id="RHEA-COMP:17342"/>
        <dbReference type="ChEBI" id="CHEBI:33019"/>
        <dbReference type="ChEBI" id="CHEBI:61557"/>
        <dbReference type="ChEBI" id="CHEBI:140395"/>
        <dbReference type="EC" id="2.7.7.6"/>
    </reaction>
</comment>
<comment type="subunit">
    <text evidence="1">Homodimer. The RNAP catalytic core consists of 2 alpha, 1 beta, 1 beta' and 1 omega subunit. When a sigma factor is associated with the core the holoenzyme is formed, which can initiate transcription.</text>
</comment>
<comment type="domain">
    <text evidence="1">The N-terminal domain is essential for RNAP assembly and basal transcription, whereas the C-terminal domain is involved in interaction with transcriptional regulators and with upstream promoter elements.</text>
</comment>
<comment type="similarity">
    <text evidence="1">Belongs to the RNA polymerase alpha chain family.</text>
</comment>
<organism>
    <name type="scientific">Actinobacillus pleuropneumoniae serotype 5b (strain L20)</name>
    <dbReference type="NCBI Taxonomy" id="416269"/>
    <lineage>
        <taxon>Bacteria</taxon>
        <taxon>Pseudomonadati</taxon>
        <taxon>Pseudomonadota</taxon>
        <taxon>Gammaproteobacteria</taxon>
        <taxon>Pasteurellales</taxon>
        <taxon>Pasteurellaceae</taxon>
        <taxon>Actinobacillus</taxon>
    </lineage>
</organism>
<gene>
    <name evidence="1" type="primary">rpoA</name>
    <name type="ordered locus">APL_1784</name>
</gene>
<protein>
    <recommendedName>
        <fullName evidence="1">DNA-directed RNA polymerase subunit alpha</fullName>
        <shortName evidence="1">RNAP subunit alpha</shortName>
        <ecNumber evidence="1">2.7.7.6</ecNumber>
    </recommendedName>
    <alternativeName>
        <fullName evidence="1">RNA polymerase subunit alpha</fullName>
    </alternativeName>
    <alternativeName>
        <fullName evidence="1">Transcriptase subunit alpha</fullName>
    </alternativeName>
</protein>
<accession>A3N382</accession>
<feature type="chain" id="PRO_0000296776" description="DNA-directed RNA polymerase subunit alpha">
    <location>
        <begin position="1"/>
        <end position="329"/>
    </location>
</feature>
<feature type="region of interest" description="Alpha N-terminal domain (alpha-NTD)" evidence="1">
    <location>
        <begin position="1"/>
        <end position="235"/>
    </location>
</feature>
<feature type="region of interest" description="Alpha C-terminal domain (alpha-CTD)" evidence="1">
    <location>
        <begin position="249"/>
        <end position="329"/>
    </location>
</feature>